<gene>
    <name evidence="1" type="primary">ureG</name>
    <name type="ordered locus">MADE_1014265</name>
</gene>
<reference key="1">
    <citation type="journal article" date="2008" name="ISME J.">
        <title>Comparative genomics of two ecotypes of the marine planktonic copiotroph Alteromonas macleodii suggests alternative lifestyles associated with different kinds of particulate organic matter.</title>
        <authorList>
            <person name="Ivars-Martinez E."/>
            <person name="Martin-Cuadrado A.-B."/>
            <person name="D'Auria G."/>
            <person name="Mira A."/>
            <person name="Ferriera S."/>
            <person name="Johnson J."/>
            <person name="Friedman R."/>
            <person name="Rodriguez-Valera F."/>
        </authorList>
    </citation>
    <scope>NUCLEOTIDE SEQUENCE [LARGE SCALE GENOMIC DNA]</scope>
    <source>
        <strain>DSM 17117 / CIP 110805 / LMG 28347 / Deep ecotype</strain>
    </source>
</reference>
<sequence length="203" mass="21899">MKKQVLRIGVGGPVGSGKTALLRQLCLSLRDKYNMAVVTNDIYTREDAEFLTKNDALAADRIIGVETGGCPHTAIREDASMNLAAIDELQARHNDLDFVLVESGGDNLSATFSPELSDLTIYVIDVSAGDKIPRKGGPGITKSDLLIINKIDVANLVGASLEVMDADTKKMRGDKPFIFSNMKTQQGLADIISFIEKEGMLSL</sequence>
<keyword id="KW-0143">Chaperone</keyword>
<keyword id="KW-0963">Cytoplasm</keyword>
<keyword id="KW-0342">GTP-binding</keyword>
<keyword id="KW-0996">Nickel insertion</keyword>
<keyword id="KW-0547">Nucleotide-binding</keyword>
<protein>
    <recommendedName>
        <fullName evidence="1">Urease accessory protein UreG</fullName>
    </recommendedName>
</protein>
<comment type="function">
    <text evidence="1">Facilitates the functional incorporation of the urease nickel metallocenter. This process requires GTP hydrolysis, probably effectuated by UreG.</text>
</comment>
<comment type="subunit">
    <text evidence="1">Homodimer. UreD, UreF and UreG form a complex that acts as a GTP-hydrolysis-dependent molecular chaperone, activating the urease apoprotein by helping to assemble the nickel containing metallocenter of UreC. The UreE protein probably delivers the nickel.</text>
</comment>
<comment type="subcellular location">
    <subcellularLocation>
        <location evidence="1">Cytoplasm</location>
    </subcellularLocation>
</comment>
<comment type="similarity">
    <text evidence="1">Belongs to the SIMIBI class G3E GTPase family. UreG subfamily.</text>
</comment>
<dbReference type="EMBL" id="CP001103">
    <property type="protein sequence ID" value="AEA98987.1"/>
    <property type="molecule type" value="Genomic_DNA"/>
</dbReference>
<dbReference type="RefSeq" id="WP_012519279.1">
    <property type="nucleotide sequence ID" value="NC_011138.3"/>
</dbReference>
<dbReference type="SMR" id="B4RSY2"/>
<dbReference type="KEGG" id="amc:MADE_1014265"/>
<dbReference type="HOGENOM" id="CLU_072144_1_0_6"/>
<dbReference type="Proteomes" id="UP000001870">
    <property type="component" value="Chromosome"/>
</dbReference>
<dbReference type="GO" id="GO:0005737">
    <property type="term" value="C:cytoplasm"/>
    <property type="evidence" value="ECO:0007669"/>
    <property type="project" value="UniProtKB-SubCell"/>
</dbReference>
<dbReference type="GO" id="GO:0005525">
    <property type="term" value="F:GTP binding"/>
    <property type="evidence" value="ECO:0007669"/>
    <property type="project" value="UniProtKB-KW"/>
</dbReference>
<dbReference type="GO" id="GO:0003924">
    <property type="term" value="F:GTPase activity"/>
    <property type="evidence" value="ECO:0007669"/>
    <property type="project" value="InterPro"/>
</dbReference>
<dbReference type="GO" id="GO:0016151">
    <property type="term" value="F:nickel cation binding"/>
    <property type="evidence" value="ECO:0007669"/>
    <property type="project" value="UniProtKB-UniRule"/>
</dbReference>
<dbReference type="GO" id="GO:0043419">
    <property type="term" value="P:urea catabolic process"/>
    <property type="evidence" value="ECO:0007669"/>
    <property type="project" value="InterPro"/>
</dbReference>
<dbReference type="CDD" id="cd05540">
    <property type="entry name" value="UreG"/>
    <property type="match status" value="1"/>
</dbReference>
<dbReference type="FunFam" id="3.40.50.300:FF:000208">
    <property type="entry name" value="Urease accessory protein UreG"/>
    <property type="match status" value="1"/>
</dbReference>
<dbReference type="Gene3D" id="3.40.50.300">
    <property type="entry name" value="P-loop containing nucleotide triphosphate hydrolases"/>
    <property type="match status" value="1"/>
</dbReference>
<dbReference type="HAMAP" id="MF_01389">
    <property type="entry name" value="UreG"/>
    <property type="match status" value="1"/>
</dbReference>
<dbReference type="InterPro" id="IPR003495">
    <property type="entry name" value="CobW/HypB/UreG_nucleotide-bd"/>
</dbReference>
<dbReference type="InterPro" id="IPR027417">
    <property type="entry name" value="P-loop_NTPase"/>
</dbReference>
<dbReference type="InterPro" id="IPR004400">
    <property type="entry name" value="UreG"/>
</dbReference>
<dbReference type="NCBIfam" id="TIGR00101">
    <property type="entry name" value="ureG"/>
    <property type="match status" value="1"/>
</dbReference>
<dbReference type="PANTHER" id="PTHR31715">
    <property type="entry name" value="UREASE ACCESSORY PROTEIN G"/>
    <property type="match status" value="1"/>
</dbReference>
<dbReference type="PANTHER" id="PTHR31715:SF0">
    <property type="entry name" value="UREASE ACCESSORY PROTEIN G"/>
    <property type="match status" value="1"/>
</dbReference>
<dbReference type="Pfam" id="PF02492">
    <property type="entry name" value="cobW"/>
    <property type="match status" value="1"/>
</dbReference>
<dbReference type="PIRSF" id="PIRSF005624">
    <property type="entry name" value="Ni-bind_GTPase"/>
    <property type="match status" value="1"/>
</dbReference>
<dbReference type="SUPFAM" id="SSF52540">
    <property type="entry name" value="P-loop containing nucleoside triphosphate hydrolases"/>
    <property type="match status" value="1"/>
</dbReference>
<proteinExistence type="inferred from homology"/>
<evidence type="ECO:0000255" key="1">
    <source>
        <dbReference type="HAMAP-Rule" id="MF_01389"/>
    </source>
</evidence>
<feature type="chain" id="PRO_1000145164" description="Urease accessory protein UreG">
    <location>
        <begin position="1"/>
        <end position="203"/>
    </location>
</feature>
<feature type="binding site" evidence="1">
    <location>
        <begin position="12"/>
        <end position="19"/>
    </location>
    <ligand>
        <name>GTP</name>
        <dbReference type="ChEBI" id="CHEBI:37565"/>
    </ligand>
</feature>
<name>UREG_ALTMD</name>
<organism>
    <name type="scientific">Alteromonas mediterranea (strain DSM 17117 / CIP 110805 / LMG 28347 / Deep ecotype)</name>
    <dbReference type="NCBI Taxonomy" id="1774373"/>
    <lineage>
        <taxon>Bacteria</taxon>
        <taxon>Pseudomonadati</taxon>
        <taxon>Pseudomonadota</taxon>
        <taxon>Gammaproteobacteria</taxon>
        <taxon>Alteromonadales</taxon>
        <taxon>Alteromonadaceae</taxon>
        <taxon>Alteromonas/Salinimonas group</taxon>
        <taxon>Alteromonas</taxon>
    </lineage>
</organism>
<accession>B4RSY2</accession>
<accession>F2GBE1</accession>